<name>GPDA_ORITB</name>
<protein>
    <recommendedName>
        <fullName evidence="1">Glycerol-3-phosphate dehydrogenase [NAD(P)+]</fullName>
        <ecNumber evidence="1">1.1.1.94</ecNumber>
    </recommendedName>
    <alternativeName>
        <fullName evidence="1">NAD(P)(+)-dependent glycerol-3-phosphate dehydrogenase</fullName>
    </alternativeName>
    <alternativeName>
        <fullName evidence="1">NAD(P)H-dependent dihydroxyacetone-phosphate reductase</fullName>
    </alternativeName>
</protein>
<evidence type="ECO:0000255" key="1">
    <source>
        <dbReference type="HAMAP-Rule" id="MF_00394"/>
    </source>
</evidence>
<comment type="function">
    <text evidence="1">Catalyzes the reduction of the glycolytic intermediate dihydroxyacetone phosphate (DHAP) to sn-glycerol 3-phosphate (G3P), the key precursor for phospholipid synthesis.</text>
</comment>
<comment type="catalytic activity">
    <reaction evidence="1">
        <text>sn-glycerol 3-phosphate + NAD(+) = dihydroxyacetone phosphate + NADH + H(+)</text>
        <dbReference type="Rhea" id="RHEA:11092"/>
        <dbReference type="ChEBI" id="CHEBI:15378"/>
        <dbReference type="ChEBI" id="CHEBI:57540"/>
        <dbReference type="ChEBI" id="CHEBI:57597"/>
        <dbReference type="ChEBI" id="CHEBI:57642"/>
        <dbReference type="ChEBI" id="CHEBI:57945"/>
        <dbReference type="EC" id="1.1.1.94"/>
    </reaction>
    <physiologicalReaction direction="right-to-left" evidence="1">
        <dbReference type="Rhea" id="RHEA:11094"/>
    </physiologicalReaction>
</comment>
<comment type="catalytic activity">
    <reaction evidence="1">
        <text>sn-glycerol 3-phosphate + NADP(+) = dihydroxyacetone phosphate + NADPH + H(+)</text>
        <dbReference type="Rhea" id="RHEA:11096"/>
        <dbReference type="ChEBI" id="CHEBI:15378"/>
        <dbReference type="ChEBI" id="CHEBI:57597"/>
        <dbReference type="ChEBI" id="CHEBI:57642"/>
        <dbReference type="ChEBI" id="CHEBI:57783"/>
        <dbReference type="ChEBI" id="CHEBI:58349"/>
        <dbReference type="EC" id="1.1.1.94"/>
    </reaction>
    <physiologicalReaction direction="right-to-left" evidence="1">
        <dbReference type="Rhea" id="RHEA:11098"/>
    </physiologicalReaction>
</comment>
<comment type="pathway">
    <text evidence="1">Membrane lipid metabolism; glycerophospholipid metabolism.</text>
</comment>
<comment type="subcellular location">
    <subcellularLocation>
        <location evidence="1">Cytoplasm</location>
    </subcellularLocation>
</comment>
<comment type="similarity">
    <text evidence="1">Belongs to the NAD-dependent glycerol-3-phosphate dehydrogenase family.</text>
</comment>
<sequence length="330" mass="36091">MKIAIIGAGAWGTAIAMLLARNNYRVTLYTRHSAHTQEINQLHTNKKYLPNIILPNIIKATSNFSDIVDHEIIIIVTPSDQVRATIENLKQHSISNNAIIGIASKGLDHNQSKLLSDVVKDYLANNPLFIIAGPNLANEVAQGLPCALTIAAIQKEVQFNISTLFHSTNVITSTTEDIITIQVASAFKNIIAIIAGIIIAKQYGQNCKASIITQGIKEIVAFARAAGSTNPDISQFGVIGDLILTSYAITSRNTKFGYDLGQHEYYTNLINNTNPNLIEGIKAAKILYPLTVKQNLNCHIIDCAYSILHNGSKISYAIECMLKKINHETK</sequence>
<reference key="1">
    <citation type="journal article" date="2007" name="Proc. Natl. Acad. Sci. U.S.A.">
        <title>The Orientia tsutsugamushi genome reveals massive proliferation of conjugative type IV secretion system and host-cell interaction genes.</title>
        <authorList>
            <person name="Cho N.-H."/>
            <person name="Kim H.-R."/>
            <person name="Lee J.-H."/>
            <person name="Kim S.-Y."/>
            <person name="Kim J."/>
            <person name="Cha S."/>
            <person name="Kim S.-Y."/>
            <person name="Darby A.C."/>
            <person name="Fuxelius H.-H."/>
            <person name="Yin J."/>
            <person name="Kim J.H."/>
            <person name="Kim J."/>
            <person name="Lee S.J."/>
            <person name="Koh Y.-S."/>
            <person name="Jang W.-J."/>
            <person name="Park K.-H."/>
            <person name="Andersson S.G.E."/>
            <person name="Choi M.-S."/>
            <person name="Kim I.-S."/>
        </authorList>
    </citation>
    <scope>NUCLEOTIDE SEQUENCE [LARGE SCALE GENOMIC DNA]</scope>
    <source>
        <strain>Boryong</strain>
    </source>
</reference>
<keyword id="KW-0963">Cytoplasm</keyword>
<keyword id="KW-0444">Lipid biosynthesis</keyword>
<keyword id="KW-0443">Lipid metabolism</keyword>
<keyword id="KW-0520">NAD</keyword>
<keyword id="KW-0521">NADP</keyword>
<keyword id="KW-0547">Nucleotide-binding</keyword>
<keyword id="KW-0560">Oxidoreductase</keyword>
<keyword id="KW-0594">Phospholipid biosynthesis</keyword>
<keyword id="KW-1208">Phospholipid metabolism</keyword>
<keyword id="KW-1185">Reference proteome</keyword>
<proteinExistence type="inferred from homology"/>
<gene>
    <name evidence="1" type="primary">gpsA</name>
    <name type="ordered locus">OTBS_1307</name>
</gene>
<accession>A5CE97</accession>
<organism>
    <name type="scientific">Orientia tsutsugamushi (strain Boryong)</name>
    <name type="common">Rickettsia tsutsugamushi</name>
    <dbReference type="NCBI Taxonomy" id="357244"/>
    <lineage>
        <taxon>Bacteria</taxon>
        <taxon>Pseudomonadati</taxon>
        <taxon>Pseudomonadota</taxon>
        <taxon>Alphaproteobacteria</taxon>
        <taxon>Rickettsiales</taxon>
        <taxon>Rickettsiaceae</taxon>
        <taxon>Rickettsieae</taxon>
        <taxon>Orientia</taxon>
    </lineage>
</organism>
<feature type="chain" id="PRO_1000049530" description="Glycerol-3-phosphate dehydrogenase [NAD(P)+]">
    <location>
        <begin position="1"/>
        <end position="330"/>
    </location>
</feature>
<feature type="active site" description="Proton acceptor" evidence="1">
    <location>
        <position position="188"/>
    </location>
</feature>
<feature type="binding site" evidence="1">
    <location>
        <position position="11"/>
    </location>
    <ligand>
        <name>NADPH</name>
        <dbReference type="ChEBI" id="CHEBI:57783"/>
    </ligand>
</feature>
<feature type="binding site" evidence="1">
    <location>
        <position position="31"/>
    </location>
    <ligand>
        <name>NADPH</name>
        <dbReference type="ChEBI" id="CHEBI:57783"/>
    </ligand>
</feature>
<feature type="binding site" evidence="1">
    <location>
        <position position="32"/>
    </location>
    <ligand>
        <name>NADPH</name>
        <dbReference type="ChEBI" id="CHEBI:57783"/>
    </ligand>
</feature>
<feature type="binding site" evidence="1">
    <location>
        <position position="105"/>
    </location>
    <ligand>
        <name>NADPH</name>
        <dbReference type="ChEBI" id="CHEBI:57783"/>
    </ligand>
</feature>
<feature type="binding site" evidence="1">
    <location>
        <position position="105"/>
    </location>
    <ligand>
        <name>sn-glycerol 3-phosphate</name>
        <dbReference type="ChEBI" id="CHEBI:57597"/>
    </ligand>
</feature>
<feature type="binding site" evidence="1">
    <location>
        <position position="133"/>
    </location>
    <ligand>
        <name>sn-glycerol 3-phosphate</name>
        <dbReference type="ChEBI" id="CHEBI:57597"/>
    </ligand>
</feature>
<feature type="binding site" evidence="1">
    <location>
        <position position="137"/>
    </location>
    <ligand>
        <name>NADPH</name>
        <dbReference type="ChEBI" id="CHEBI:57783"/>
    </ligand>
</feature>
<feature type="binding site" evidence="1">
    <location>
        <position position="188"/>
    </location>
    <ligand>
        <name>sn-glycerol 3-phosphate</name>
        <dbReference type="ChEBI" id="CHEBI:57597"/>
    </ligand>
</feature>
<feature type="binding site" evidence="1">
    <location>
        <position position="241"/>
    </location>
    <ligand>
        <name>sn-glycerol 3-phosphate</name>
        <dbReference type="ChEBI" id="CHEBI:57597"/>
    </ligand>
</feature>
<feature type="binding site" evidence="1">
    <location>
        <position position="251"/>
    </location>
    <ligand>
        <name>sn-glycerol 3-phosphate</name>
        <dbReference type="ChEBI" id="CHEBI:57597"/>
    </ligand>
</feature>
<feature type="binding site" evidence="1">
    <location>
        <position position="252"/>
    </location>
    <ligand>
        <name>NADPH</name>
        <dbReference type="ChEBI" id="CHEBI:57783"/>
    </ligand>
</feature>
<feature type="binding site" evidence="1">
    <location>
        <position position="252"/>
    </location>
    <ligand>
        <name>sn-glycerol 3-phosphate</name>
        <dbReference type="ChEBI" id="CHEBI:57597"/>
    </ligand>
</feature>
<feature type="binding site" evidence="1">
    <location>
        <position position="253"/>
    </location>
    <ligand>
        <name>sn-glycerol 3-phosphate</name>
        <dbReference type="ChEBI" id="CHEBI:57597"/>
    </ligand>
</feature>
<feature type="binding site" evidence="1">
    <location>
        <position position="277"/>
    </location>
    <ligand>
        <name>NADPH</name>
        <dbReference type="ChEBI" id="CHEBI:57783"/>
    </ligand>
</feature>
<feature type="binding site" evidence="1">
    <location>
        <position position="279"/>
    </location>
    <ligand>
        <name>NADPH</name>
        <dbReference type="ChEBI" id="CHEBI:57783"/>
    </ligand>
</feature>
<dbReference type="EC" id="1.1.1.94" evidence="1"/>
<dbReference type="EMBL" id="AM494475">
    <property type="protein sequence ID" value="CAM80373.1"/>
    <property type="molecule type" value="Genomic_DNA"/>
</dbReference>
<dbReference type="RefSeq" id="WP_011944851.1">
    <property type="nucleotide sequence ID" value="NC_009488.1"/>
</dbReference>
<dbReference type="SMR" id="A5CE97"/>
<dbReference type="KEGG" id="ots:OTBS_1307"/>
<dbReference type="eggNOG" id="COG0240">
    <property type="taxonomic scope" value="Bacteria"/>
</dbReference>
<dbReference type="HOGENOM" id="CLU_033449_0_0_5"/>
<dbReference type="UniPathway" id="UPA00940"/>
<dbReference type="Proteomes" id="UP000001565">
    <property type="component" value="Chromosome"/>
</dbReference>
<dbReference type="GO" id="GO:0005829">
    <property type="term" value="C:cytosol"/>
    <property type="evidence" value="ECO:0007669"/>
    <property type="project" value="TreeGrafter"/>
</dbReference>
<dbReference type="GO" id="GO:0047952">
    <property type="term" value="F:glycerol-3-phosphate dehydrogenase [NAD(P)+] activity"/>
    <property type="evidence" value="ECO:0007669"/>
    <property type="project" value="UniProtKB-UniRule"/>
</dbReference>
<dbReference type="GO" id="GO:0051287">
    <property type="term" value="F:NAD binding"/>
    <property type="evidence" value="ECO:0007669"/>
    <property type="project" value="InterPro"/>
</dbReference>
<dbReference type="GO" id="GO:0005975">
    <property type="term" value="P:carbohydrate metabolic process"/>
    <property type="evidence" value="ECO:0007669"/>
    <property type="project" value="InterPro"/>
</dbReference>
<dbReference type="GO" id="GO:0046167">
    <property type="term" value="P:glycerol-3-phosphate biosynthetic process"/>
    <property type="evidence" value="ECO:0007669"/>
    <property type="project" value="UniProtKB-UniRule"/>
</dbReference>
<dbReference type="GO" id="GO:0046168">
    <property type="term" value="P:glycerol-3-phosphate catabolic process"/>
    <property type="evidence" value="ECO:0007669"/>
    <property type="project" value="InterPro"/>
</dbReference>
<dbReference type="GO" id="GO:0006650">
    <property type="term" value="P:glycerophospholipid metabolic process"/>
    <property type="evidence" value="ECO:0007669"/>
    <property type="project" value="UniProtKB-UniRule"/>
</dbReference>
<dbReference type="GO" id="GO:0008654">
    <property type="term" value="P:phospholipid biosynthetic process"/>
    <property type="evidence" value="ECO:0007669"/>
    <property type="project" value="UniProtKB-KW"/>
</dbReference>
<dbReference type="Gene3D" id="1.10.1040.10">
    <property type="entry name" value="N-(1-d-carboxylethyl)-l-norvaline Dehydrogenase, domain 2"/>
    <property type="match status" value="1"/>
</dbReference>
<dbReference type="Gene3D" id="3.40.50.720">
    <property type="entry name" value="NAD(P)-binding Rossmann-like Domain"/>
    <property type="match status" value="1"/>
</dbReference>
<dbReference type="HAMAP" id="MF_00394">
    <property type="entry name" value="NAD_Glyc3P_dehydrog"/>
    <property type="match status" value="1"/>
</dbReference>
<dbReference type="InterPro" id="IPR008927">
    <property type="entry name" value="6-PGluconate_DH-like_C_sf"/>
</dbReference>
<dbReference type="InterPro" id="IPR013328">
    <property type="entry name" value="6PGD_dom2"/>
</dbReference>
<dbReference type="InterPro" id="IPR006168">
    <property type="entry name" value="G3P_DH_NAD-dep"/>
</dbReference>
<dbReference type="InterPro" id="IPR006109">
    <property type="entry name" value="G3P_DH_NAD-dep_C"/>
</dbReference>
<dbReference type="InterPro" id="IPR011128">
    <property type="entry name" value="G3P_DH_NAD-dep_N"/>
</dbReference>
<dbReference type="InterPro" id="IPR036291">
    <property type="entry name" value="NAD(P)-bd_dom_sf"/>
</dbReference>
<dbReference type="NCBIfam" id="NF000940">
    <property type="entry name" value="PRK00094.1-2"/>
    <property type="match status" value="1"/>
</dbReference>
<dbReference type="NCBIfam" id="NF000942">
    <property type="entry name" value="PRK00094.1-4"/>
    <property type="match status" value="1"/>
</dbReference>
<dbReference type="NCBIfam" id="NF000947">
    <property type="entry name" value="PRK00094.2-5"/>
    <property type="match status" value="1"/>
</dbReference>
<dbReference type="PANTHER" id="PTHR11728">
    <property type="entry name" value="GLYCEROL-3-PHOSPHATE DEHYDROGENASE"/>
    <property type="match status" value="1"/>
</dbReference>
<dbReference type="PANTHER" id="PTHR11728:SF1">
    <property type="entry name" value="GLYCEROL-3-PHOSPHATE DEHYDROGENASE [NAD(+)] 2, CHLOROPLASTIC"/>
    <property type="match status" value="1"/>
</dbReference>
<dbReference type="Pfam" id="PF07479">
    <property type="entry name" value="NAD_Gly3P_dh_C"/>
    <property type="match status" value="1"/>
</dbReference>
<dbReference type="Pfam" id="PF01210">
    <property type="entry name" value="NAD_Gly3P_dh_N"/>
    <property type="match status" value="1"/>
</dbReference>
<dbReference type="PIRSF" id="PIRSF000114">
    <property type="entry name" value="Glycerol-3-P_dh"/>
    <property type="match status" value="1"/>
</dbReference>
<dbReference type="PRINTS" id="PR00077">
    <property type="entry name" value="GPDHDRGNASE"/>
</dbReference>
<dbReference type="SUPFAM" id="SSF48179">
    <property type="entry name" value="6-phosphogluconate dehydrogenase C-terminal domain-like"/>
    <property type="match status" value="1"/>
</dbReference>
<dbReference type="SUPFAM" id="SSF51735">
    <property type="entry name" value="NAD(P)-binding Rossmann-fold domains"/>
    <property type="match status" value="1"/>
</dbReference>
<dbReference type="PROSITE" id="PS00957">
    <property type="entry name" value="NAD_G3PDH"/>
    <property type="match status" value="1"/>
</dbReference>